<protein>
    <recommendedName>
        <fullName evidence="7">Tetraspanin-2A</fullName>
    </recommendedName>
</protein>
<accession>O46101</accession>
<dbReference type="EMBL" id="AE014298">
    <property type="protein sequence ID" value="AAF45608.1"/>
    <property type="molecule type" value="Genomic_DNA"/>
</dbReference>
<dbReference type="EMBL" id="AE014298">
    <property type="protein sequence ID" value="ADV37607.1"/>
    <property type="molecule type" value="Genomic_DNA"/>
</dbReference>
<dbReference type="EMBL" id="AL022018">
    <property type="protein sequence ID" value="CAA17687.1"/>
    <property type="molecule type" value="Genomic_DNA"/>
</dbReference>
<dbReference type="EMBL" id="BT014915">
    <property type="protein sequence ID" value="AAT47766.1"/>
    <property type="molecule type" value="mRNA"/>
</dbReference>
<dbReference type="PIR" id="T13615">
    <property type="entry name" value="T13615"/>
</dbReference>
<dbReference type="RefSeq" id="NP_001188523.1">
    <property type="nucleotide sequence ID" value="NM_001201594.2"/>
</dbReference>
<dbReference type="RefSeq" id="NP_525037.1">
    <property type="nucleotide sequence ID" value="NM_080298.4"/>
</dbReference>
<dbReference type="SMR" id="O46101"/>
<dbReference type="FunCoup" id="O46101">
    <property type="interactions" value="6"/>
</dbReference>
<dbReference type="STRING" id="7227.FBpp0070204"/>
<dbReference type="PaxDb" id="7227-FBpp0070204"/>
<dbReference type="EnsemblMetazoa" id="FBtr0070211">
    <property type="protein sequence ID" value="FBpp0070204"/>
    <property type="gene ID" value="FBgn0024361"/>
</dbReference>
<dbReference type="EnsemblMetazoa" id="FBtr0303284">
    <property type="protein sequence ID" value="FBpp0292376"/>
    <property type="gene ID" value="FBgn0024361"/>
</dbReference>
<dbReference type="GeneID" id="31080"/>
<dbReference type="KEGG" id="dme:Dmel_CG11415"/>
<dbReference type="UCSC" id="CG11415-RA">
    <property type="organism name" value="d. melanogaster"/>
</dbReference>
<dbReference type="AGR" id="FB:FBgn0024361"/>
<dbReference type="CTD" id="31080"/>
<dbReference type="FlyBase" id="FBgn0024361">
    <property type="gene designation" value="Tsp2A"/>
</dbReference>
<dbReference type="VEuPathDB" id="VectorBase:FBgn0024361"/>
<dbReference type="eggNOG" id="KOG3882">
    <property type="taxonomic scope" value="Eukaryota"/>
</dbReference>
<dbReference type="HOGENOM" id="CLU_055524_8_0_1"/>
<dbReference type="InParanoid" id="O46101"/>
<dbReference type="OMA" id="YEFYIGI"/>
<dbReference type="OrthoDB" id="10051670at2759"/>
<dbReference type="PhylomeDB" id="O46101"/>
<dbReference type="Reactome" id="R-DME-6798695">
    <property type="pathway name" value="Neutrophil degranulation"/>
</dbReference>
<dbReference type="BioGRID-ORCS" id="31080">
    <property type="hits" value="0 hits in 1 CRISPR screen"/>
</dbReference>
<dbReference type="ChiTaRS" id="Tsp2A">
    <property type="organism name" value="fly"/>
</dbReference>
<dbReference type="GenomeRNAi" id="31080"/>
<dbReference type="PRO" id="PR:O46101"/>
<dbReference type="Proteomes" id="UP000000803">
    <property type="component" value="Chromosome X"/>
</dbReference>
<dbReference type="Bgee" id="FBgn0024361">
    <property type="expression patterns" value="Expressed in adult posterior midgut class II enteroendocrine cell in adult midgut (Drosophila) and 62 other cell types or tissues"/>
</dbReference>
<dbReference type="GO" id="GO:0016327">
    <property type="term" value="C:apicolateral plasma membrane"/>
    <property type="evidence" value="ECO:0000314"/>
    <property type="project" value="UniProtKB"/>
</dbReference>
<dbReference type="GO" id="GO:0016020">
    <property type="term" value="C:membrane"/>
    <property type="evidence" value="ECO:0000255"/>
    <property type="project" value="FlyBase"/>
</dbReference>
<dbReference type="GO" id="GO:0005886">
    <property type="term" value="C:plasma membrane"/>
    <property type="evidence" value="ECO:0000318"/>
    <property type="project" value="GO_Central"/>
</dbReference>
<dbReference type="GO" id="GO:0005920">
    <property type="term" value="C:smooth septate junction"/>
    <property type="evidence" value="ECO:0000314"/>
    <property type="project" value="UniProtKB"/>
</dbReference>
<dbReference type="GO" id="GO:0061028">
    <property type="term" value="P:establishment of endothelial barrier"/>
    <property type="evidence" value="ECO:0000315"/>
    <property type="project" value="UniProtKB"/>
</dbReference>
<dbReference type="GO" id="GO:0008347">
    <property type="term" value="P:glial cell migration"/>
    <property type="evidence" value="ECO:0000316"/>
    <property type="project" value="FlyBase"/>
</dbReference>
<dbReference type="GO" id="GO:0090528">
    <property type="term" value="P:smooth septate junction assembly"/>
    <property type="evidence" value="ECO:0000315"/>
    <property type="project" value="UniProtKB"/>
</dbReference>
<dbReference type="CDD" id="cd03127">
    <property type="entry name" value="tetraspanin_LEL"/>
    <property type="match status" value="1"/>
</dbReference>
<dbReference type="FunFam" id="1.10.1450.10:FF:000034">
    <property type="entry name" value="Tetraspanin"/>
    <property type="match status" value="1"/>
</dbReference>
<dbReference type="Gene3D" id="1.10.1450.10">
    <property type="entry name" value="Tetraspanin"/>
    <property type="match status" value="1"/>
</dbReference>
<dbReference type="InterPro" id="IPR018499">
    <property type="entry name" value="Tetraspanin/Peripherin"/>
</dbReference>
<dbReference type="InterPro" id="IPR000301">
    <property type="entry name" value="Tetraspanin_animals"/>
</dbReference>
<dbReference type="InterPro" id="IPR008952">
    <property type="entry name" value="Tetraspanin_EC2_sf"/>
</dbReference>
<dbReference type="PANTHER" id="PTHR19282">
    <property type="entry name" value="TETRASPANIN"/>
    <property type="match status" value="1"/>
</dbReference>
<dbReference type="PANTHER" id="PTHR19282:SF555">
    <property type="entry name" value="TETRASPANIN-2A"/>
    <property type="match status" value="1"/>
</dbReference>
<dbReference type="Pfam" id="PF00335">
    <property type="entry name" value="Tetraspanin"/>
    <property type="match status" value="1"/>
</dbReference>
<dbReference type="PIRSF" id="PIRSF002419">
    <property type="entry name" value="Tetraspanin"/>
    <property type="match status" value="1"/>
</dbReference>
<dbReference type="PRINTS" id="PR00259">
    <property type="entry name" value="TMFOUR"/>
</dbReference>
<dbReference type="SUPFAM" id="SSF48652">
    <property type="entry name" value="Tetraspanin"/>
    <property type="match status" value="1"/>
</dbReference>
<feature type="chain" id="PRO_0000437455" description="Tetraspanin-2A">
    <location>
        <begin position="1"/>
        <end position="244"/>
    </location>
</feature>
<feature type="topological domain" description="Cytoplasmic" evidence="4">
    <location>
        <begin position="1"/>
        <end position="22"/>
    </location>
</feature>
<feature type="transmembrane region" description="Helical" evidence="1">
    <location>
        <begin position="23"/>
        <end position="43"/>
    </location>
</feature>
<feature type="topological domain" description="Extracellular" evidence="4">
    <location>
        <begin position="44"/>
        <end position="61"/>
    </location>
</feature>
<feature type="transmembrane region" description="Helical" evidence="1">
    <location>
        <begin position="62"/>
        <end position="82"/>
    </location>
</feature>
<feature type="topological domain" description="Cytoplasmic" evidence="4">
    <location>
        <begin position="83"/>
        <end position="91"/>
    </location>
</feature>
<feature type="transmembrane region" description="Helical" evidence="1">
    <location>
        <begin position="92"/>
        <end position="112"/>
    </location>
</feature>
<feature type="topological domain" description="Extracellular" evidence="4">
    <location>
        <begin position="113"/>
        <end position="206"/>
    </location>
</feature>
<feature type="transmembrane region" description="Helical" evidence="1">
    <location>
        <begin position="207"/>
        <end position="227"/>
    </location>
</feature>
<feature type="topological domain" description="Cytoplasmic" evidence="4">
    <location>
        <begin position="228"/>
        <end position="244"/>
    </location>
</feature>
<name>TSN2A_DROME</name>
<organism evidence="8">
    <name type="scientific">Drosophila melanogaster</name>
    <name type="common">Fruit fly</name>
    <dbReference type="NCBI Taxonomy" id="7227"/>
    <lineage>
        <taxon>Eukaryota</taxon>
        <taxon>Metazoa</taxon>
        <taxon>Ecdysozoa</taxon>
        <taxon>Arthropoda</taxon>
        <taxon>Hexapoda</taxon>
        <taxon>Insecta</taxon>
        <taxon>Pterygota</taxon>
        <taxon>Neoptera</taxon>
        <taxon>Endopterygota</taxon>
        <taxon>Diptera</taxon>
        <taxon>Brachycera</taxon>
        <taxon>Muscomorpha</taxon>
        <taxon>Ephydroidea</taxon>
        <taxon>Drosophilidae</taxon>
        <taxon>Drosophila</taxon>
        <taxon>Sophophora</taxon>
    </lineage>
</organism>
<gene>
    <name evidence="7" type="primary">Tsp2A</name>
    <name evidence="7" type="ORF">CG11415</name>
</gene>
<comment type="function">
    <text evidence="3">Required for assembly of smooth septate junctions (sSJs), together with Ssk and mesh. Important for barrier function of the midgut epithelium.</text>
</comment>
<comment type="subunit">
    <text evidence="3">Forms a complex with Ssk and mesh.</text>
</comment>
<comment type="subcellular location">
    <subcellularLocation>
        <location evidence="3">Apicolateral cell membrane</location>
        <topology evidence="1">Multi-pass membrane protein</topology>
    </subcellularLocation>
    <subcellularLocation>
        <location evidence="3">Cell junction</location>
        <location evidence="3">Septate junction</location>
    </subcellularLocation>
</comment>
<comment type="developmental stage">
    <text evidence="3">Detected in embryos from stage 15 onwards (at protein level). In first instar larvae, detected in midgut, Malpighian tubules and outer epithelial layer of the proventriculus (OELP) (at protein level).</text>
</comment>
<comment type="similarity">
    <text evidence="2">Belongs to the tetraspanin (TM4SF) family.</text>
</comment>
<sequence>MGIGYGASDEQLEKQIGCVKYTLFCFNIVAWMISTALFALTVWLRAEPGFNDWLRILEAQSFYIGVYVLIGISIVMMAVSFLGCLSALMENTLALFVFVGTQVFGFIAIVAGSAVLLQFSTINSSLQPLLNVSLRGFVATSEYTYSNYVLTMIQENIGCCGATGPWDYLDLRQPLPSSCRDTVSGNAFFNGCVDELTWFFEGKTGWIVALAMTLGLLNVICAVMSFVLVQAVKKEEEQASNYRR</sequence>
<proteinExistence type="evidence at protein level"/>
<keyword id="KW-0965">Cell junction</keyword>
<keyword id="KW-1003">Cell membrane</keyword>
<keyword id="KW-0472">Membrane</keyword>
<keyword id="KW-1185">Reference proteome</keyword>
<keyword id="KW-0812">Transmembrane</keyword>
<keyword id="KW-1133">Transmembrane helix</keyword>
<reference evidence="8" key="1">
    <citation type="journal article" date="2000" name="Science">
        <title>The genome sequence of Drosophila melanogaster.</title>
        <authorList>
            <person name="Adams M.D."/>
            <person name="Celniker S.E."/>
            <person name="Holt R.A."/>
            <person name="Evans C.A."/>
            <person name="Gocayne J.D."/>
            <person name="Amanatides P.G."/>
            <person name="Scherer S.E."/>
            <person name="Li P.W."/>
            <person name="Hoskins R.A."/>
            <person name="Galle R.F."/>
            <person name="George R.A."/>
            <person name="Lewis S.E."/>
            <person name="Richards S."/>
            <person name="Ashburner M."/>
            <person name="Henderson S.N."/>
            <person name="Sutton G.G."/>
            <person name="Wortman J.R."/>
            <person name="Yandell M.D."/>
            <person name="Zhang Q."/>
            <person name="Chen L.X."/>
            <person name="Brandon R.C."/>
            <person name="Rogers Y.-H.C."/>
            <person name="Blazej R.G."/>
            <person name="Champe M."/>
            <person name="Pfeiffer B.D."/>
            <person name="Wan K.H."/>
            <person name="Doyle C."/>
            <person name="Baxter E.G."/>
            <person name="Helt G."/>
            <person name="Nelson C.R."/>
            <person name="Miklos G.L.G."/>
            <person name="Abril J.F."/>
            <person name="Agbayani A."/>
            <person name="An H.-J."/>
            <person name="Andrews-Pfannkoch C."/>
            <person name="Baldwin D."/>
            <person name="Ballew R.M."/>
            <person name="Basu A."/>
            <person name="Baxendale J."/>
            <person name="Bayraktaroglu L."/>
            <person name="Beasley E.M."/>
            <person name="Beeson K.Y."/>
            <person name="Benos P.V."/>
            <person name="Berman B.P."/>
            <person name="Bhandari D."/>
            <person name="Bolshakov S."/>
            <person name="Borkova D."/>
            <person name="Botchan M.R."/>
            <person name="Bouck J."/>
            <person name="Brokstein P."/>
            <person name="Brottier P."/>
            <person name="Burtis K.C."/>
            <person name="Busam D.A."/>
            <person name="Butler H."/>
            <person name="Cadieu E."/>
            <person name="Center A."/>
            <person name="Chandra I."/>
            <person name="Cherry J.M."/>
            <person name="Cawley S."/>
            <person name="Dahlke C."/>
            <person name="Davenport L.B."/>
            <person name="Davies P."/>
            <person name="de Pablos B."/>
            <person name="Delcher A."/>
            <person name="Deng Z."/>
            <person name="Mays A.D."/>
            <person name="Dew I."/>
            <person name="Dietz S.M."/>
            <person name="Dodson K."/>
            <person name="Doup L.E."/>
            <person name="Downes M."/>
            <person name="Dugan-Rocha S."/>
            <person name="Dunkov B.C."/>
            <person name="Dunn P."/>
            <person name="Durbin K.J."/>
            <person name="Evangelista C.C."/>
            <person name="Ferraz C."/>
            <person name="Ferriera S."/>
            <person name="Fleischmann W."/>
            <person name="Fosler C."/>
            <person name="Gabrielian A.E."/>
            <person name="Garg N.S."/>
            <person name="Gelbart W.M."/>
            <person name="Glasser K."/>
            <person name="Glodek A."/>
            <person name="Gong F."/>
            <person name="Gorrell J.H."/>
            <person name="Gu Z."/>
            <person name="Guan P."/>
            <person name="Harris M."/>
            <person name="Harris N.L."/>
            <person name="Harvey D.A."/>
            <person name="Heiman T.J."/>
            <person name="Hernandez J.R."/>
            <person name="Houck J."/>
            <person name="Hostin D."/>
            <person name="Houston K.A."/>
            <person name="Howland T.J."/>
            <person name="Wei M.-H."/>
            <person name="Ibegwam C."/>
            <person name="Jalali M."/>
            <person name="Kalush F."/>
            <person name="Karpen G.H."/>
            <person name="Ke Z."/>
            <person name="Kennison J.A."/>
            <person name="Ketchum K.A."/>
            <person name="Kimmel B.E."/>
            <person name="Kodira C.D."/>
            <person name="Kraft C.L."/>
            <person name="Kravitz S."/>
            <person name="Kulp D."/>
            <person name="Lai Z."/>
            <person name="Lasko P."/>
            <person name="Lei Y."/>
            <person name="Levitsky A.A."/>
            <person name="Li J.H."/>
            <person name="Li Z."/>
            <person name="Liang Y."/>
            <person name="Lin X."/>
            <person name="Liu X."/>
            <person name="Mattei B."/>
            <person name="McIntosh T.C."/>
            <person name="McLeod M.P."/>
            <person name="McPherson D."/>
            <person name="Merkulov G."/>
            <person name="Milshina N.V."/>
            <person name="Mobarry C."/>
            <person name="Morris J."/>
            <person name="Moshrefi A."/>
            <person name="Mount S.M."/>
            <person name="Moy M."/>
            <person name="Murphy B."/>
            <person name="Murphy L."/>
            <person name="Muzny D.M."/>
            <person name="Nelson D.L."/>
            <person name="Nelson D.R."/>
            <person name="Nelson K.A."/>
            <person name="Nixon K."/>
            <person name="Nusskern D.R."/>
            <person name="Pacleb J.M."/>
            <person name="Palazzolo M."/>
            <person name="Pittman G.S."/>
            <person name="Pan S."/>
            <person name="Pollard J."/>
            <person name="Puri V."/>
            <person name="Reese M.G."/>
            <person name="Reinert K."/>
            <person name="Remington K."/>
            <person name="Saunders R.D.C."/>
            <person name="Scheeler F."/>
            <person name="Shen H."/>
            <person name="Shue B.C."/>
            <person name="Siden-Kiamos I."/>
            <person name="Simpson M."/>
            <person name="Skupski M.P."/>
            <person name="Smith T.J."/>
            <person name="Spier E."/>
            <person name="Spradling A.C."/>
            <person name="Stapleton M."/>
            <person name="Strong R."/>
            <person name="Sun E."/>
            <person name="Svirskas R."/>
            <person name="Tector C."/>
            <person name="Turner R."/>
            <person name="Venter E."/>
            <person name="Wang A.H."/>
            <person name="Wang X."/>
            <person name="Wang Z.-Y."/>
            <person name="Wassarman D.A."/>
            <person name="Weinstock G.M."/>
            <person name="Weissenbach J."/>
            <person name="Williams S.M."/>
            <person name="Woodage T."/>
            <person name="Worley K.C."/>
            <person name="Wu D."/>
            <person name="Yang S."/>
            <person name="Yao Q.A."/>
            <person name="Ye J."/>
            <person name="Yeh R.-F."/>
            <person name="Zaveri J.S."/>
            <person name="Zhan M."/>
            <person name="Zhang G."/>
            <person name="Zhao Q."/>
            <person name="Zheng L."/>
            <person name="Zheng X.H."/>
            <person name="Zhong F.N."/>
            <person name="Zhong W."/>
            <person name="Zhou X."/>
            <person name="Zhu S.C."/>
            <person name="Zhu X."/>
            <person name="Smith H.O."/>
            <person name="Gibbs R.A."/>
            <person name="Myers E.W."/>
            <person name="Rubin G.M."/>
            <person name="Venter J.C."/>
        </authorList>
    </citation>
    <scope>NUCLEOTIDE SEQUENCE [LARGE SCALE GENOMIC DNA]</scope>
    <source>
        <strain>Berkeley</strain>
    </source>
</reference>
<reference evidence="8" key="2">
    <citation type="journal article" date="2002" name="Genome Biol.">
        <title>Annotation of the Drosophila melanogaster euchromatic genome: a systematic review.</title>
        <authorList>
            <person name="Misra S."/>
            <person name="Crosby M.A."/>
            <person name="Mungall C.J."/>
            <person name="Matthews B.B."/>
            <person name="Campbell K.S."/>
            <person name="Hradecky P."/>
            <person name="Huang Y."/>
            <person name="Kaminker J.S."/>
            <person name="Millburn G.H."/>
            <person name="Prochnik S.E."/>
            <person name="Smith C.D."/>
            <person name="Tupy J.L."/>
            <person name="Whitfield E.J."/>
            <person name="Bayraktaroglu L."/>
            <person name="Berman B.P."/>
            <person name="Bettencourt B.R."/>
            <person name="Celniker S.E."/>
            <person name="de Grey A.D.N.J."/>
            <person name="Drysdale R.A."/>
            <person name="Harris N.L."/>
            <person name="Richter J."/>
            <person name="Russo S."/>
            <person name="Schroeder A.J."/>
            <person name="Shu S.Q."/>
            <person name="Stapleton M."/>
            <person name="Yamada C."/>
            <person name="Ashburner M."/>
            <person name="Gelbart W.M."/>
            <person name="Rubin G.M."/>
            <person name="Lewis S.E."/>
        </authorList>
    </citation>
    <scope>GENOME REANNOTATION</scope>
    <source>
        <strain evidence="8">Berkeley</strain>
    </source>
</reference>
<reference evidence="6" key="3">
    <citation type="journal article" date="2000" name="Science">
        <title>From sequence to chromosome: the tip of the X chromosome of D. melanogaster.</title>
        <authorList>
            <person name="Benos P.V."/>
            <person name="Gatt M.K."/>
            <person name="Ashburner M."/>
            <person name="Murphy L."/>
            <person name="Harris D."/>
            <person name="Barrell B.G."/>
            <person name="Ferraz C."/>
            <person name="Vidal S."/>
            <person name="Brun C."/>
            <person name="Demailles J."/>
            <person name="Cadieu E."/>
            <person name="Dreano S."/>
            <person name="Gloux S."/>
            <person name="Lelaure V."/>
            <person name="Mottier S."/>
            <person name="Galibert F."/>
            <person name="Borkova D."/>
            <person name="Minana B."/>
            <person name="Kafatos F.C."/>
            <person name="Louis C."/>
            <person name="Siden-Kiamos I."/>
            <person name="Bolshakov S."/>
            <person name="Papagiannakis G."/>
            <person name="Spanos L."/>
            <person name="Cox S."/>
            <person name="Madueno E."/>
            <person name="de Pablos B."/>
            <person name="Modolell J."/>
            <person name="Peter A."/>
            <person name="Schoettler P."/>
            <person name="Werner M."/>
            <person name="Mourkioti F."/>
            <person name="Beinert N."/>
            <person name="Dowe G."/>
            <person name="Schaefer U."/>
            <person name="Jaeckle H."/>
            <person name="Bucheton A."/>
            <person name="Callister D.M."/>
            <person name="Campbell L.A."/>
            <person name="Darlamitsou A."/>
            <person name="Henderson N.S."/>
            <person name="McMillan P.J."/>
            <person name="Salles C."/>
            <person name="Tait E.A."/>
            <person name="Valenti P."/>
            <person name="Saunders R.D.C."/>
            <person name="Glover D.M."/>
        </authorList>
    </citation>
    <scope>NUCLEOTIDE SEQUENCE [LARGE SCALE GENOMIC DNA]</scope>
    <source>
        <strain evidence="6">Oregon-R</strain>
    </source>
</reference>
<reference evidence="5" key="4">
    <citation type="submission" date="2004-06" db="EMBL/GenBank/DDBJ databases">
        <authorList>
            <person name="Stapleton M."/>
            <person name="Carlson J."/>
            <person name="Chavez C."/>
            <person name="Frise E."/>
            <person name="George R."/>
            <person name="Pacleb J."/>
            <person name="Park S."/>
            <person name="Wan K."/>
            <person name="Yu C."/>
            <person name="Rubin G.M."/>
            <person name="Celniker S."/>
        </authorList>
    </citation>
    <scope>NUCLEOTIDE SEQUENCE [LARGE SCALE MRNA]</scope>
    <source>
        <strain evidence="5">Berkeley</strain>
    </source>
</reference>
<reference evidence="4" key="5">
    <citation type="journal article" date="2016" name="J. Cell Sci.">
        <title>A tetraspanin regulates septate junction formation in Drosophila midgut.</title>
        <authorList>
            <person name="Izumi Y."/>
            <person name="Motoishi M."/>
            <person name="Furuse K."/>
            <person name="Furuse M."/>
        </authorList>
    </citation>
    <scope>FUNCTION</scope>
    <scope>IDENTIFICATION IN A COMPLEX WITH SSK AND MESH</scope>
    <scope>SUBCELLULAR LOCATION</scope>
    <scope>DEVELOPMENTAL STAGE</scope>
</reference>
<evidence type="ECO:0000255" key="1"/>
<evidence type="ECO:0000255" key="2">
    <source>
        <dbReference type="RuleBase" id="RU361218"/>
    </source>
</evidence>
<evidence type="ECO:0000269" key="3">
    <source>
    </source>
</evidence>
<evidence type="ECO:0000305" key="4"/>
<evidence type="ECO:0000312" key="5">
    <source>
        <dbReference type="EMBL" id="AAT47766.1"/>
    </source>
</evidence>
<evidence type="ECO:0000312" key="6">
    <source>
        <dbReference type="EMBL" id="CAA17687.1"/>
    </source>
</evidence>
<evidence type="ECO:0000312" key="7">
    <source>
        <dbReference type="FlyBase" id="FBgn0024361"/>
    </source>
</evidence>
<evidence type="ECO:0000312" key="8">
    <source>
        <dbReference type="Proteomes" id="UP000000803"/>
    </source>
</evidence>